<sequence>MVKLANPLYTEWILEAIQKIKKQKQRPSEERICHAVSTSHGLDKKTVSEQLELSVQDGSVLKVTNKGLASYKDPDNPGRFSSVKPGTFPKSAKGSRGSCNDLRNVDWNKLLRRAIEGLEEPNGSSLKNIEKYLRSQSDLTSTTNNPAFQQRLRLGAKRAVNNGRLLKDGPQYRVNYGSLDGKGAPQYPSAFPSSLPPVSLLPHEKDQPRADPIPICSFCLGTKESNREKKPEELLSCADCGSSGHPSCLKFCPELTTNVKALRWQCIECKTCSACRVQGRNADNMLFCDSCDRGFHMECCDPPLSRMPKGMWICQVCRPKKKGRKLLHEKAAQIKRRYAKPIGRPKNKLKQRLLSVTSDEGSMNAFTGRGSPGRGQKTKVCTTPSSGHAASGKDSSSRLAVTDPTRPGATTKITTTSTYISASTLKVNKKTKGLIDGLTKFFTPSPDGRRSRGEIIDFSKHYRPRKKVSQKQSCTSHVLATGTTQKLKPPPSSLPPPTPISGQSPSSQKSSTATSSPSPQSSSSQCSVPSLSSLTTNSQLKALFDGLSHIYTTQGQSRKKGHPSYAPPKRMRRKTELSSTAKSKAHFFGKRDIRSRFISHSSSSSWGMARGSIFKAIAHFKRTTFLKKHRMLGRLKYKVTPQMGTPSPGKGSLTDGRIKPDQDDDTEIKINIKQESADVNVIGNKDVVTEEDLDVFKQAQELSWEKIECESGVEDCGRYPSVIEFGKYEIQTWYSSPYPQEYARLPKLYLCEFCLKYMKSKNILLRHSKKCGWFHPPANEIYRRKDLSVFEVDGNMSKIYCQNLCLLAKLFLDHKTLYYDVEPFLFYVLTKNDEKGCHLVGYFSKEKLCQQKYNVSCIMIMPQHQRQGFGRFLIDFSYLLSRREGQAGSPEKPLSDLGRLSYLAYWKSVILEYLYHHHERHISIKAISRATGMCPHDIATTLQHLHMIDKRDGRFVIIRREKLILSHMEKLKTCSRANELDPDSLRWTPILISNAAVSEEEREAEKEAERLMEQASCWEKEEQEILSTRANSRQSPAKVQSKNKYLHSPESRPVTGERGQLLELSKESSEEEEEEEDEEEEEEEEEEEEDEEEEEEEEEEEEEENIQSSPPRLTKPQSVAIKRKRPFVLKKKRGRKRRRINSSVTTETISETTEVLNEPFDNSDEERPMPQLEPTCEIEVEEDGRKPVLRKAFQHQPGKKRQTEEEEGKDNHCFKNADPCRNNMNDDSSNLKEGSKDNPEPLKCKQVWPKGTKRGLSKWRQNKERKTGFKLNLYTPPETPMEPDEQVTVEEQKETSEGKTSPSPIRIEEEVKETGEALLPQEENRREETCAPVSPNTSPGEKPEDDLIKPEEEEEEEEEEEEEEEEEEGEEEEGGGNVEKDPDGAKSQEKEEPEISTEKEDSARLDDHEEEEEEDEEPSHNEDHDADDEDDSHMESAEVEKEELPRESFKEVLENQETFLDLNVQPGHSNPEVLMDCGVDLTASCNSEPKELAGDPEAVPESDEEPPPGEQAQKQDQKNSKEVDTEFKEGNPATMEIDSETVQAVQSLTQESSEQDDTFQDCAETQEACRSLQNYTRADQSPQIATTLDDCQQSDHSSPVSSVHSHPGQSVRSVNSPSVPALENSYAQISPDQSAISVPSLQNMETSPMMDVPSVSDHSQQVVDSGFSDLGSIESTTENYENPSSYDSTMGGSICGNGSSQNSCSYSNLTSSSLTQSSCAVTQQMSNISGSCSMLQQTSISSPPTCSVKSPQGCVVERPPSSSQQLAQCSMAANFTPPMQLAEIPETSNANIGLYERMGQSDFGAGHYPQPSATFSLAKLQQLTNTLIDHSLPYSHSAAVTSYANSASLSTPLSNTGLVQLSQSPHSVPGGPQAQATMTPPPNLTPPPMNLPPPLLQRNMAASNIGISHSQRLQTQIASKGHISMRTKSASLSPAAATHQSQIYGRSQTVAMQGPARTLTMQRGMNMSVNLMPAPAYNVNSVNMNMNTLNAMNGYSMSQPMMNSGYHSNHGYMNQTPQYPMQMQMGMMGTQPYAQQPMQTPPHGNMMYTAPGHHGYMNTGMSKQSLNGSYMRR</sequence>
<feature type="chain" id="PRO_0000051575" description="Histone acetyltransferase KAT6B">
    <location>
        <begin position="1"/>
        <end position="2073"/>
    </location>
</feature>
<feature type="domain" description="SAMD1-like winged helix (WH)" evidence="6">
    <location>
        <begin position="1"/>
        <end position="77"/>
    </location>
</feature>
<feature type="domain" description="H15" evidence="4">
    <location>
        <begin position="103"/>
        <end position="176"/>
    </location>
</feature>
<feature type="domain" description="MYST-type HAT" evidence="5">
    <location>
        <begin position="715"/>
        <end position="989"/>
    </location>
</feature>
<feature type="zinc finger region" description="PHD-type 1" evidence="3">
    <location>
        <begin position="213"/>
        <end position="272"/>
    </location>
</feature>
<feature type="zinc finger region" description="PHD-type 2" evidence="3">
    <location>
        <begin position="269"/>
        <end position="320"/>
    </location>
</feature>
<feature type="zinc finger region" description="C2HC MYST-type" evidence="5">
    <location>
        <begin position="748"/>
        <end position="773"/>
    </location>
</feature>
<feature type="region of interest" description="Disordered" evidence="7">
    <location>
        <begin position="72"/>
        <end position="97"/>
    </location>
</feature>
<feature type="region of interest" description="Disordered" evidence="7">
    <location>
        <begin position="360"/>
        <end position="409"/>
    </location>
</feature>
<feature type="region of interest" description="Negatively regulates HAT activity">
    <location>
        <begin position="361"/>
        <end position="717"/>
    </location>
</feature>
<feature type="region of interest" description="Disordered" evidence="7">
    <location>
        <begin position="442"/>
        <end position="531"/>
    </location>
</feature>
<feature type="region of interest" description="Disordered" evidence="7">
    <location>
        <begin position="553"/>
        <end position="583"/>
    </location>
</feature>
<feature type="region of interest" description="Disordered" evidence="7">
    <location>
        <begin position="639"/>
        <end position="663"/>
    </location>
</feature>
<feature type="region of interest" description="Catalytic">
    <location>
        <begin position="718"/>
        <end position="1008"/>
    </location>
</feature>
<feature type="region of interest" description="Interaction with BRPF1" evidence="13">
    <location>
        <begin position="752"/>
        <end position="1008"/>
    </location>
</feature>
<feature type="region of interest" description="Disordered" evidence="7">
    <location>
        <begin position="1022"/>
        <end position="1452"/>
    </location>
</feature>
<feature type="region of interest" description="Disordered" evidence="7">
    <location>
        <begin position="1484"/>
        <end position="1538"/>
    </location>
</feature>
<feature type="region of interest" description="Interaction with RUNX1 and RUNX2" evidence="10">
    <location>
        <begin position="1560"/>
        <end position="2073"/>
    </location>
</feature>
<feature type="region of interest" description="Disordered" evidence="7">
    <location>
        <begin position="1580"/>
        <end position="1619"/>
    </location>
</feature>
<feature type="compositionally biased region" description="Polar residues" evidence="7">
    <location>
        <begin position="379"/>
        <end position="399"/>
    </location>
</feature>
<feature type="compositionally biased region" description="Basic and acidic residues" evidence="7">
    <location>
        <begin position="447"/>
        <end position="460"/>
    </location>
</feature>
<feature type="compositionally biased region" description="Polar residues" evidence="7">
    <location>
        <begin position="470"/>
        <end position="485"/>
    </location>
</feature>
<feature type="compositionally biased region" description="Pro residues" evidence="7">
    <location>
        <begin position="488"/>
        <end position="499"/>
    </location>
</feature>
<feature type="compositionally biased region" description="Low complexity" evidence="7">
    <location>
        <begin position="501"/>
        <end position="531"/>
    </location>
</feature>
<feature type="compositionally biased region" description="Polar residues" evidence="7">
    <location>
        <begin position="1025"/>
        <end position="1043"/>
    </location>
</feature>
<feature type="compositionally biased region" description="Acidic residues" evidence="7">
    <location>
        <begin position="1069"/>
        <end position="1105"/>
    </location>
</feature>
<feature type="compositionally biased region" description="Polar residues" evidence="7">
    <location>
        <begin position="1106"/>
        <end position="1117"/>
    </location>
</feature>
<feature type="compositionally biased region" description="Basic residues" evidence="7">
    <location>
        <begin position="1121"/>
        <end position="1140"/>
    </location>
</feature>
<feature type="compositionally biased region" description="Low complexity" evidence="7">
    <location>
        <begin position="1142"/>
        <end position="1155"/>
    </location>
</feature>
<feature type="compositionally biased region" description="Basic residues" evidence="7">
    <location>
        <begin position="1187"/>
        <end position="1200"/>
    </location>
</feature>
<feature type="compositionally biased region" description="Basic and acidic residues" evidence="7">
    <location>
        <begin position="1229"/>
        <end position="1243"/>
    </location>
</feature>
<feature type="compositionally biased region" description="Basic and acidic residues" evidence="7">
    <location>
        <begin position="1306"/>
        <end position="1315"/>
    </location>
</feature>
<feature type="compositionally biased region" description="Basic and acidic residues" evidence="7">
    <location>
        <begin position="1341"/>
        <end position="1350"/>
    </location>
</feature>
<feature type="compositionally biased region" description="Acidic residues" evidence="7">
    <location>
        <begin position="1351"/>
        <end position="1374"/>
    </location>
</feature>
<feature type="compositionally biased region" description="Basic and acidic residues" evidence="7">
    <location>
        <begin position="1378"/>
        <end position="1390"/>
    </location>
</feature>
<feature type="compositionally biased region" description="Basic and acidic residues" evidence="7">
    <location>
        <begin position="1396"/>
        <end position="1407"/>
    </location>
</feature>
<feature type="compositionally biased region" description="Acidic residues" evidence="7">
    <location>
        <begin position="1408"/>
        <end position="1417"/>
    </location>
</feature>
<feature type="compositionally biased region" description="Basic and acidic residues" evidence="7">
    <location>
        <begin position="1433"/>
        <end position="1452"/>
    </location>
</feature>
<feature type="compositionally biased region" description="Acidic residues" evidence="7">
    <location>
        <begin position="1498"/>
        <end position="1507"/>
    </location>
</feature>
<feature type="compositionally biased region" description="Basic and acidic residues" evidence="7">
    <location>
        <begin position="1513"/>
        <end position="1529"/>
    </location>
</feature>
<feature type="compositionally biased region" description="Polar residues" evidence="7">
    <location>
        <begin position="1580"/>
        <end position="1591"/>
    </location>
</feature>
<feature type="compositionally biased region" description="Low complexity" evidence="7">
    <location>
        <begin position="1594"/>
        <end position="1611"/>
    </location>
</feature>
<feature type="active site" description="Proton donor/acceptor" evidence="2">
    <location>
        <position position="891"/>
    </location>
</feature>
<feature type="binding site" evidence="1">
    <location>
        <begin position="856"/>
        <end position="860"/>
    </location>
    <ligand>
        <name>acetyl-CoA</name>
        <dbReference type="ChEBI" id="CHEBI:57288"/>
    </ligand>
</feature>
<feature type="binding site" evidence="1">
    <location>
        <begin position="865"/>
        <end position="871"/>
    </location>
    <ligand>
        <name>acetyl-CoA</name>
        <dbReference type="ChEBI" id="CHEBI:57288"/>
    </ligand>
</feature>
<feature type="binding site" evidence="1">
    <location>
        <position position="895"/>
    </location>
    <ligand>
        <name>acetyl-CoA</name>
        <dbReference type="ChEBI" id="CHEBI:57288"/>
    </ligand>
</feature>
<feature type="site" description="Breakpoint for translocation to form KAT6B-CREBBP">
    <location>
        <begin position="1222"/>
        <end position="1223"/>
    </location>
</feature>
<feature type="modified residue" description="Phosphoserine" evidence="20">
    <location>
        <position position="355"/>
    </location>
</feature>
<feature type="modified residue" description="Phosphoserine" evidence="20">
    <location>
        <position position="647"/>
    </location>
</feature>
<feature type="modified residue" description="N6-acetyllysine; by autocatalysis" evidence="1">
    <location>
        <position position="815"/>
    </location>
</feature>
<feature type="modified residue" description="N6-acetyllysine" evidence="19">
    <location>
        <position position="1038"/>
    </location>
</feature>
<feature type="modified residue" description="N6-acetyllysine" evidence="19">
    <location>
        <position position="1042"/>
    </location>
</feature>
<feature type="modified residue" description="N6-acetyllysine" evidence="19">
    <location>
        <position position="1044"/>
    </location>
</feature>
<feature type="modified residue" description="Phosphoserine" evidence="20">
    <location>
        <position position="1048"/>
    </location>
</feature>
<feature type="cross-link" description="Glycyl lysine isopeptide (Lys-Gly) (interchain with G-Cter in SUMO2)" evidence="21 22 23">
    <location>
        <position position="673"/>
    </location>
</feature>
<feature type="splice variant" id="VSP_014586" description="In isoform 3." evidence="16 17">
    <location>
        <begin position="373"/>
        <end position="664"/>
    </location>
</feature>
<feature type="splice variant" id="VSP_014587" description="In isoform 2." evidence="16">
    <location>
        <begin position="482"/>
        <end position="664"/>
    </location>
</feature>
<feature type="sequence variant" id="VAR_067315" evidence="14">
    <original>E</original>
    <variation>K</variation>
    <location>
        <position position="360"/>
    </location>
</feature>
<feature type="sequence variant" id="VAR_036361" description="In a breast cancer sample; somatic mutation." evidence="12">
    <original>T</original>
    <variation>A</variation>
    <location>
        <position position="483"/>
    </location>
</feature>
<feature type="sequence variant" id="VAR_061367" description="In dbSNP:rs57372986.">
    <original>A</original>
    <variation>S</variation>
    <location>
        <position position="1217"/>
    </location>
</feature>
<feature type="sequence variant" id="VAR_050217" description="In dbSNP:rs3740321.">
    <original>V</original>
    <variation>I</variation>
    <location>
        <position position="1499"/>
    </location>
</feature>
<feature type="sequence conflict" description="In Ref. 2; AAL56647." evidence="18" ref="2">
    <original>G</original>
    <variation>R</variation>
    <location>
        <position position="123"/>
    </location>
</feature>
<feature type="sequence conflict" description="In Ref. 2; AAL56647." evidence="18" ref="2">
    <original>P</original>
    <variation>A</variation>
    <location>
        <position position="231"/>
    </location>
</feature>
<feature type="sequence conflict" description="In Ref. 1; AAF00095/AAF00099/AAF00100 and 3; BAA20837." evidence="18" ref="1 3">
    <original>F</original>
    <variation>L</variation>
    <location>
        <position position="843"/>
    </location>
</feature>
<feature type="sequence conflict" description="In Ref. 2; AAL56647." evidence="18" ref="2">
    <original>TGM</original>
    <variation>RHV</variation>
    <location>
        <begin position="931"/>
        <end position="933"/>
    </location>
</feature>
<feature type="sequence conflict" description="In Ref. 2; AAL56647." evidence="18" ref="2">
    <location>
        <position position="934"/>
    </location>
</feature>
<feature type="sequence conflict" description="In Ref. 2; AAL56647." evidence="18" ref="2">
    <original>T</original>
    <variation>S</variation>
    <location>
        <position position="1152"/>
    </location>
</feature>
<feature type="sequence conflict" description="In Ref. 2; AAL56647." evidence="18" ref="2">
    <original>S</original>
    <variation>T</variation>
    <location>
        <position position="1625"/>
    </location>
</feature>
<feature type="sequence conflict" description="In Ref. 2; AAL56647." evidence="18" ref="2">
    <original>S</original>
    <variation>T</variation>
    <location>
        <position position="1731"/>
    </location>
</feature>
<feature type="helix" evidence="25">
    <location>
        <begin position="107"/>
        <end position="118"/>
    </location>
</feature>
<feature type="helix" evidence="25">
    <location>
        <begin position="126"/>
        <end position="135"/>
    </location>
</feature>
<feature type="strand" evidence="25">
    <location>
        <begin position="137"/>
        <end position="139"/>
    </location>
</feature>
<feature type="helix" evidence="25">
    <location>
        <begin position="140"/>
        <end position="144"/>
    </location>
</feature>
<feature type="helix" evidence="25">
    <location>
        <begin position="147"/>
        <end position="162"/>
    </location>
</feature>
<feature type="strand" evidence="25">
    <location>
        <begin position="164"/>
        <end position="168"/>
    </location>
</feature>
<feature type="strand" evidence="25">
    <location>
        <begin position="171"/>
        <end position="174"/>
    </location>
</feature>
<feature type="strand" evidence="24">
    <location>
        <begin position="214"/>
        <end position="216"/>
    </location>
</feature>
<feature type="turn" evidence="24">
    <location>
        <begin position="217"/>
        <end position="219"/>
    </location>
</feature>
<feature type="turn" evidence="24">
    <location>
        <begin position="238"/>
        <end position="240"/>
    </location>
</feature>
<feature type="helix" evidence="24">
    <location>
        <begin position="246"/>
        <end position="249"/>
    </location>
</feature>
<feature type="helix" evidence="24">
    <location>
        <begin position="253"/>
        <end position="260"/>
    </location>
</feature>
<feature type="turn" evidence="24">
    <location>
        <begin position="267"/>
        <end position="269"/>
    </location>
</feature>
<feature type="turn" evidence="24">
    <location>
        <begin position="273"/>
        <end position="275"/>
    </location>
</feature>
<feature type="helix" evidence="24">
    <location>
        <begin position="282"/>
        <end position="284"/>
    </location>
</feature>
<feature type="turn" evidence="24">
    <location>
        <begin position="289"/>
        <end position="291"/>
    </location>
</feature>
<feature type="helix" evidence="24">
    <location>
        <begin position="297"/>
        <end position="299"/>
    </location>
</feature>
<feature type="strand" evidence="24">
    <location>
        <begin position="300"/>
        <end position="302"/>
    </location>
</feature>
<feature type="turn" evidence="24">
    <location>
        <begin position="315"/>
        <end position="317"/>
    </location>
</feature>
<dbReference type="EC" id="2.3.1.48" evidence="8"/>
<dbReference type="EMBL" id="AF113514">
    <property type="protein sequence ID" value="AAF00095.1"/>
    <property type="molecule type" value="mRNA"/>
</dbReference>
<dbReference type="EMBL" id="AF119230">
    <property type="protein sequence ID" value="AAF00099.1"/>
    <property type="molecule type" value="mRNA"/>
</dbReference>
<dbReference type="EMBL" id="AF119231">
    <property type="protein sequence ID" value="AAF00100.1"/>
    <property type="status" value="ALT_FRAME"/>
    <property type="molecule type" value="mRNA"/>
</dbReference>
<dbReference type="EMBL" id="AF217500">
    <property type="protein sequence ID" value="AAL56647.1"/>
    <property type="molecule type" value="mRNA"/>
</dbReference>
<dbReference type="EMBL" id="AB002381">
    <property type="protein sequence ID" value="BAA20837.2"/>
    <property type="molecule type" value="mRNA"/>
</dbReference>
<dbReference type="EMBL" id="BC014143">
    <property type="protein sequence ID" value="AAH14143.1"/>
    <property type="status" value="ALT_SEQ"/>
    <property type="molecule type" value="mRNA"/>
</dbReference>
<dbReference type="EMBL" id="BC021128">
    <property type="protein sequence ID" value="AAH21128.1"/>
    <property type="molecule type" value="mRNA"/>
</dbReference>
<dbReference type="EMBL" id="BC048199">
    <property type="protein sequence ID" value="AAH48199.1"/>
    <property type="status" value="ALT_SEQ"/>
    <property type="molecule type" value="mRNA"/>
</dbReference>
<dbReference type="CCDS" id="CCDS58084.1">
    <molecule id="Q8WYB5-3"/>
</dbReference>
<dbReference type="CCDS" id="CCDS58085.1">
    <molecule id="Q8WYB5-2"/>
</dbReference>
<dbReference type="CCDS" id="CCDS7345.1">
    <molecule id="Q8WYB5-1"/>
</dbReference>
<dbReference type="RefSeq" id="NP_001243397.1">
    <molecule id="Q8WYB5-2"/>
    <property type="nucleotide sequence ID" value="NM_001256468.2"/>
</dbReference>
<dbReference type="RefSeq" id="NP_001243398.1">
    <molecule id="Q8WYB5-3"/>
    <property type="nucleotide sequence ID" value="NM_001256469.2"/>
</dbReference>
<dbReference type="RefSeq" id="NP_001357065.1">
    <molecule id="Q8WYB5-1"/>
    <property type="nucleotide sequence ID" value="NM_001370136.1"/>
</dbReference>
<dbReference type="RefSeq" id="NP_001357066.1">
    <molecule id="Q8WYB5-1"/>
    <property type="nucleotide sequence ID" value="NM_001370137.1"/>
</dbReference>
<dbReference type="RefSeq" id="NP_001357067.1">
    <molecule id="Q8WYB5-2"/>
    <property type="nucleotide sequence ID" value="NM_001370138.1"/>
</dbReference>
<dbReference type="RefSeq" id="NP_001357068.1">
    <molecule id="Q8WYB5-3"/>
    <property type="nucleotide sequence ID" value="NM_001370139.1"/>
</dbReference>
<dbReference type="RefSeq" id="NP_001357069.1">
    <molecule id="Q8WYB5-3"/>
    <property type="nucleotide sequence ID" value="NM_001370140.1"/>
</dbReference>
<dbReference type="RefSeq" id="NP_001357070.1">
    <molecule id="Q8WYB5-3"/>
    <property type="nucleotide sequence ID" value="NM_001370141.1"/>
</dbReference>
<dbReference type="RefSeq" id="NP_001357071.1">
    <molecule id="Q8WYB5-3"/>
    <property type="nucleotide sequence ID" value="NM_001370142.1"/>
</dbReference>
<dbReference type="RefSeq" id="NP_036462.2">
    <molecule id="Q8WYB5-1"/>
    <property type="nucleotide sequence ID" value="NM_012330.4"/>
</dbReference>
<dbReference type="RefSeq" id="XP_005269721.1">
    <molecule id="Q8WYB5-1"/>
    <property type="nucleotide sequence ID" value="XM_005269664.3"/>
</dbReference>
<dbReference type="RefSeq" id="XP_016871489.1">
    <property type="nucleotide sequence ID" value="XM_017016000.1"/>
</dbReference>
<dbReference type="RefSeq" id="XP_016871490.1">
    <property type="nucleotide sequence ID" value="XM_017016001.1"/>
</dbReference>
<dbReference type="RefSeq" id="XP_016871491.1">
    <property type="nucleotide sequence ID" value="XM_017016002.1"/>
</dbReference>
<dbReference type="RefSeq" id="XP_016871492.1">
    <property type="nucleotide sequence ID" value="XM_017016003.1"/>
</dbReference>
<dbReference type="RefSeq" id="XP_016871494.1">
    <property type="nucleotide sequence ID" value="XM_017016005.1"/>
</dbReference>
<dbReference type="RefSeq" id="XP_016871495.1">
    <property type="nucleotide sequence ID" value="XM_017016006.1"/>
</dbReference>
<dbReference type="RefSeq" id="XP_016871496.1">
    <property type="nucleotide sequence ID" value="XM_017016007.1"/>
</dbReference>
<dbReference type="RefSeq" id="XP_016871497.1">
    <property type="nucleotide sequence ID" value="XM_017016008.1"/>
</dbReference>
<dbReference type="RefSeq" id="XP_047280867.1">
    <molecule id="Q8WYB5-1"/>
    <property type="nucleotide sequence ID" value="XM_047424911.1"/>
</dbReference>
<dbReference type="RefSeq" id="XP_047280868.1">
    <molecule id="Q8WYB5-1"/>
    <property type="nucleotide sequence ID" value="XM_047424912.1"/>
</dbReference>
<dbReference type="RefSeq" id="XP_047280872.1">
    <molecule id="Q8WYB5-2"/>
    <property type="nucleotide sequence ID" value="XM_047424916.1"/>
</dbReference>
<dbReference type="RefSeq" id="XP_047280873.1">
    <molecule id="Q8WYB5-2"/>
    <property type="nucleotide sequence ID" value="XM_047424917.1"/>
</dbReference>
<dbReference type="RefSeq" id="XP_047280874.1">
    <molecule id="Q8WYB5-2"/>
    <property type="nucleotide sequence ID" value="XM_047424918.1"/>
</dbReference>
<dbReference type="RefSeq" id="XP_047280875.1">
    <molecule id="Q8WYB5-2"/>
    <property type="nucleotide sequence ID" value="XM_047424919.1"/>
</dbReference>
<dbReference type="RefSeq" id="XP_047280879.1">
    <molecule id="Q8WYB5-3"/>
    <property type="nucleotide sequence ID" value="XM_047424923.1"/>
</dbReference>
<dbReference type="RefSeq" id="XP_047280880.1">
    <molecule id="Q8WYB5-3"/>
    <property type="nucleotide sequence ID" value="XM_047424924.1"/>
</dbReference>
<dbReference type="RefSeq" id="XP_047280882.1">
    <molecule id="Q8WYB5-3"/>
    <property type="nucleotide sequence ID" value="XM_047424926.1"/>
</dbReference>
<dbReference type="RefSeq" id="XP_047280883.1">
    <molecule id="Q8WYB5-3"/>
    <property type="nucleotide sequence ID" value="XM_047424927.1"/>
</dbReference>
<dbReference type="RefSeq" id="XP_054187567.1">
    <molecule id="Q8WYB5-1"/>
    <property type="nucleotide sequence ID" value="XM_054331592.1"/>
</dbReference>
<dbReference type="RefSeq" id="XP_054187568.1">
    <molecule id="Q8WYB5-1"/>
    <property type="nucleotide sequence ID" value="XM_054331593.1"/>
</dbReference>
<dbReference type="RefSeq" id="XP_054187569.1">
    <molecule id="Q8WYB5-1"/>
    <property type="nucleotide sequence ID" value="XM_054331594.1"/>
</dbReference>
<dbReference type="RefSeq" id="XP_054187573.1">
    <molecule id="Q8WYB5-2"/>
    <property type="nucleotide sequence ID" value="XM_054331598.1"/>
</dbReference>
<dbReference type="RefSeq" id="XP_054187574.1">
    <molecule id="Q8WYB5-2"/>
    <property type="nucleotide sequence ID" value="XM_054331599.1"/>
</dbReference>
<dbReference type="RefSeq" id="XP_054187575.1">
    <molecule id="Q8WYB5-2"/>
    <property type="nucleotide sequence ID" value="XM_054331600.1"/>
</dbReference>
<dbReference type="RefSeq" id="XP_054187576.1">
    <molecule id="Q8WYB5-2"/>
    <property type="nucleotide sequence ID" value="XM_054331601.1"/>
</dbReference>
<dbReference type="RefSeq" id="XP_054187580.1">
    <molecule id="Q8WYB5-3"/>
    <property type="nucleotide sequence ID" value="XM_054331605.1"/>
</dbReference>
<dbReference type="RefSeq" id="XP_054187581.1">
    <molecule id="Q8WYB5-3"/>
    <property type="nucleotide sequence ID" value="XM_054331606.1"/>
</dbReference>
<dbReference type="RefSeq" id="XP_054187582.1">
    <molecule id="Q8WYB5-3"/>
    <property type="nucleotide sequence ID" value="XM_054331607.1"/>
</dbReference>
<dbReference type="RefSeq" id="XP_054187583.1">
    <molecule id="Q8WYB5-3"/>
    <property type="nucleotide sequence ID" value="XM_054331608.1"/>
</dbReference>
<dbReference type="RefSeq" id="XP_054221326.1">
    <molecule id="Q8WYB5-1"/>
    <property type="nucleotide sequence ID" value="XM_054365351.1"/>
</dbReference>
<dbReference type="RefSeq" id="XP_054221327.1">
    <molecule id="Q8WYB5-1"/>
    <property type="nucleotide sequence ID" value="XM_054365352.1"/>
</dbReference>
<dbReference type="RefSeq" id="XP_054221328.1">
    <molecule id="Q8WYB5-1"/>
    <property type="nucleotide sequence ID" value="XM_054365353.1"/>
</dbReference>
<dbReference type="RefSeq" id="XP_054221332.1">
    <molecule id="Q8WYB5-2"/>
    <property type="nucleotide sequence ID" value="XM_054365357.1"/>
</dbReference>
<dbReference type="RefSeq" id="XP_054221333.1">
    <molecule id="Q8WYB5-2"/>
    <property type="nucleotide sequence ID" value="XM_054365358.1"/>
</dbReference>
<dbReference type="RefSeq" id="XP_054221334.1">
    <molecule id="Q8WYB5-2"/>
    <property type="nucleotide sequence ID" value="XM_054365359.1"/>
</dbReference>
<dbReference type="RefSeq" id="XP_054221335.1">
    <molecule id="Q8WYB5-2"/>
    <property type="nucleotide sequence ID" value="XM_054365360.1"/>
</dbReference>
<dbReference type="RefSeq" id="XP_054221339.1">
    <molecule id="Q8WYB5-3"/>
    <property type="nucleotide sequence ID" value="XM_054365364.1"/>
</dbReference>
<dbReference type="RefSeq" id="XP_054221340.1">
    <molecule id="Q8WYB5-3"/>
    <property type="nucleotide sequence ID" value="XM_054365365.1"/>
</dbReference>
<dbReference type="RefSeq" id="XP_054221341.1">
    <molecule id="Q8WYB5-3"/>
    <property type="nucleotide sequence ID" value="XM_054365366.1"/>
</dbReference>
<dbReference type="RefSeq" id="XP_054221342.1">
    <molecule id="Q8WYB5-3"/>
    <property type="nucleotide sequence ID" value="XM_054365367.1"/>
</dbReference>
<dbReference type="PDB" id="5U2J">
    <property type="method" value="X-ray"/>
    <property type="resolution" value="1.60 A"/>
    <property type="chains" value="A/B=211-320"/>
</dbReference>
<dbReference type="PDB" id="6OIE">
    <property type="method" value="X-ray"/>
    <property type="resolution" value="2.08 A"/>
    <property type="chains" value="A/B=211-322"/>
</dbReference>
<dbReference type="PDB" id="8E4V">
    <property type="method" value="NMR"/>
    <property type="chains" value="A=100-182"/>
</dbReference>
<dbReference type="PDBsum" id="5U2J"/>
<dbReference type="PDBsum" id="6OIE"/>
<dbReference type="PDBsum" id="8E4V"/>
<dbReference type="SMR" id="Q8WYB5"/>
<dbReference type="BioGRID" id="117069">
    <property type="interactions" value="37"/>
</dbReference>
<dbReference type="ComplexPortal" id="CPX-738">
    <property type="entry name" value="MORF1 histone acetyltransferase complex"/>
</dbReference>
<dbReference type="ComplexPortal" id="CPX-739">
    <property type="entry name" value="MORF2 histone acetyltransferase complex"/>
</dbReference>
<dbReference type="ComplexPortal" id="CPX-740">
    <property type="entry name" value="MORF3 histone acetyltransferase complex"/>
</dbReference>
<dbReference type="CORUM" id="Q8WYB5"/>
<dbReference type="FunCoup" id="Q8WYB5">
    <property type="interactions" value="2618"/>
</dbReference>
<dbReference type="IntAct" id="Q8WYB5">
    <property type="interactions" value="15"/>
</dbReference>
<dbReference type="MINT" id="Q8WYB5"/>
<dbReference type="STRING" id="9606.ENSP00000287239"/>
<dbReference type="BindingDB" id="Q8WYB5"/>
<dbReference type="ChEMBL" id="CHEMBL3774300"/>
<dbReference type="GuidetoPHARMACOLOGY" id="2666"/>
<dbReference type="MoonDB" id="Q8WYB5">
    <property type="type" value="Predicted"/>
</dbReference>
<dbReference type="GlyGen" id="Q8WYB5">
    <property type="glycosylation" value="4 sites, 2 N-linked glycans (2 sites), 1 O-linked glycan (1 site)"/>
</dbReference>
<dbReference type="iPTMnet" id="Q8WYB5"/>
<dbReference type="PhosphoSitePlus" id="Q8WYB5"/>
<dbReference type="BioMuta" id="KAT6B"/>
<dbReference type="DMDM" id="143811424"/>
<dbReference type="jPOST" id="Q8WYB5"/>
<dbReference type="MassIVE" id="Q8WYB5"/>
<dbReference type="PaxDb" id="9606-ENSP00000287239"/>
<dbReference type="PeptideAtlas" id="Q8WYB5"/>
<dbReference type="ProteomicsDB" id="75154">
    <molecule id="Q8WYB5-1"/>
</dbReference>
<dbReference type="ProteomicsDB" id="75155">
    <molecule id="Q8WYB5-2"/>
</dbReference>
<dbReference type="ProteomicsDB" id="75156">
    <molecule id="Q8WYB5-3"/>
</dbReference>
<dbReference type="Pumba" id="Q8WYB5"/>
<dbReference type="Antibodypedia" id="1807">
    <property type="antibodies" value="78 antibodies from 22 providers"/>
</dbReference>
<dbReference type="DNASU" id="23522"/>
<dbReference type="Ensembl" id="ENST00000287239.10">
    <molecule id="Q8WYB5-1"/>
    <property type="protein sequence ID" value="ENSP00000287239.4"/>
    <property type="gene ID" value="ENSG00000156650.14"/>
</dbReference>
<dbReference type="Ensembl" id="ENST00000372711.2">
    <molecule id="Q8WYB5-2"/>
    <property type="protein sequence ID" value="ENSP00000361796.1"/>
    <property type="gene ID" value="ENSG00000156650.14"/>
</dbReference>
<dbReference type="Ensembl" id="ENST00000372714.6">
    <molecule id="Q8WYB5-3"/>
    <property type="protein sequence ID" value="ENSP00000361799.1"/>
    <property type="gene ID" value="ENSG00000156650.14"/>
</dbReference>
<dbReference type="Ensembl" id="ENST00000372724.6">
    <molecule id="Q8WYB5-2"/>
    <property type="protein sequence ID" value="ENSP00000361809.2"/>
    <property type="gene ID" value="ENSG00000156650.14"/>
</dbReference>
<dbReference type="Ensembl" id="ENST00000372725.6">
    <molecule id="Q8WYB5-3"/>
    <property type="protein sequence ID" value="ENSP00000361810.1"/>
    <property type="gene ID" value="ENSG00000156650.14"/>
</dbReference>
<dbReference type="Ensembl" id="ENST00000628038.3">
    <molecule id="Q8WYB5-3"/>
    <property type="protein sequence ID" value="ENSP00000485896.1"/>
    <property type="gene ID" value="ENSG00000281813.4"/>
</dbReference>
<dbReference type="Ensembl" id="ENST00000628523.3">
    <molecule id="Q8WYB5-2"/>
    <property type="protein sequence ID" value="ENSP00000487238.2"/>
    <property type="gene ID" value="ENSG00000281813.4"/>
</dbReference>
<dbReference type="Ensembl" id="ENST00000629233.3">
    <molecule id="Q8WYB5-3"/>
    <property type="protein sequence ID" value="ENSP00000487219.1"/>
    <property type="gene ID" value="ENSG00000281813.4"/>
</dbReference>
<dbReference type="Ensembl" id="ENST00000629879.2">
    <molecule id="Q8WYB5-2"/>
    <property type="protein sequence ID" value="ENSP00000486731.1"/>
    <property type="gene ID" value="ENSG00000281813.4"/>
</dbReference>
<dbReference type="Ensembl" id="ENST00000630001.4">
    <molecule id="Q8WYB5-1"/>
    <property type="protein sequence ID" value="ENSP00000486595.1"/>
    <property type="gene ID" value="ENSG00000281813.4"/>
</dbReference>
<dbReference type="Ensembl" id="ENST00000647630.1">
    <molecule id="Q8WYB5-1"/>
    <property type="protein sequence ID" value="ENSP00000497352.1"/>
    <property type="gene ID" value="ENSG00000281813.4"/>
</dbReference>
<dbReference type="Ensembl" id="ENST00000648605.1">
    <molecule id="Q8WYB5-1"/>
    <property type="protein sequence ID" value="ENSP00000497718.1"/>
    <property type="gene ID" value="ENSG00000281813.4"/>
</dbReference>
<dbReference type="Ensembl" id="ENST00000648725.1">
    <molecule id="Q8WYB5-1"/>
    <property type="protein sequence ID" value="ENSP00000497841.1"/>
    <property type="gene ID" value="ENSG00000156650.14"/>
</dbReference>
<dbReference type="Ensembl" id="ENST00000648892.1">
    <molecule id="Q8WYB5-3"/>
    <property type="protein sequence ID" value="ENSP00000497048.1"/>
    <property type="gene ID" value="ENSG00000156650.14"/>
</dbReference>
<dbReference type="Ensembl" id="ENST00000649006.1">
    <molecule id="Q8WYB5-3"/>
    <property type="protein sequence ID" value="ENSP00000498139.1"/>
    <property type="gene ID" value="ENSG00000156650.14"/>
</dbReference>
<dbReference type="Ensembl" id="ENST00000649463.1">
    <molecule id="Q8WYB5-1"/>
    <property type="protein sequence ID" value="ENSP00000497166.1"/>
    <property type="gene ID" value="ENSG00000156650.14"/>
</dbReference>
<dbReference type="Ensembl" id="ENST00000649574.1">
    <molecule id="Q8WYB5-3"/>
    <property type="protein sequence ID" value="ENSP00000497416.1"/>
    <property type="gene ID" value="ENSG00000281813.4"/>
</dbReference>
<dbReference type="Ensembl" id="ENST00000650575.1">
    <molecule id="Q8WYB5-3"/>
    <property type="protein sequence ID" value="ENSP00000497453.1"/>
    <property type="gene ID" value="ENSG00000281813.4"/>
</dbReference>
<dbReference type="GeneID" id="23522"/>
<dbReference type="KEGG" id="hsa:23522"/>
<dbReference type="MANE-Select" id="ENST00000287239.10">
    <property type="protein sequence ID" value="ENSP00000287239.4"/>
    <property type="RefSeq nucleotide sequence ID" value="NM_012330.4"/>
    <property type="RefSeq protein sequence ID" value="NP_036462.2"/>
</dbReference>
<dbReference type="UCSC" id="uc001jwm.3">
    <molecule id="Q8WYB5-1"/>
    <property type="organism name" value="human"/>
</dbReference>
<dbReference type="AGR" id="HGNC:17582"/>
<dbReference type="CTD" id="23522"/>
<dbReference type="DisGeNET" id="23522"/>
<dbReference type="GeneCards" id="KAT6B"/>
<dbReference type="GeneReviews" id="KAT6B"/>
<dbReference type="HGNC" id="HGNC:17582">
    <property type="gene designation" value="KAT6B"/>
</dbReference>
<dbReference type="HPA" id="ENSG00000156650">
    <property type="expression patterns" value="Low tissue specificity"/>
</dbReference>
<dbReference type="MalaCards" id="KAT6B"/>
<dbReference type="MIM" id="603736">
    <property type="type" value="phenotype"/>
</dbReference>
<dbReference type="MIM" id="605880">
    <property type="type" value="gene"/>
</dbReference>
<dbReference type="MIM" id="606170">
    <property type="type" value="phenotype"/>
</dbReference>
<dbReference type="neXtProt" id="NX_Q8WYB5"/>
<dbReference type="OpenTargets" id="ENSG00000156650"/>
<dbReference type="Orphanet" id="3047">
    <property type="disease" value="Blepharophimosis-intellectual disability syndrome, SBBYS type"/>
</dbReference>
<dbReference type="Orphanet" id="85201">
    <property type="disease" value="Genitopatellar syndrome"/>
</dbReference>
<dbReference type="PharmGKB" id="PA134880712"/>
<dbReference type="VEuPathDB" id="HostDB:ENSG00000156650"/>
<dbReference type="eggNOG" id="KOG2747">
    <property type="taxonomic scope" value="Eukaryota"/>
</dbReference>
<dbReference type="GeneTree" id="ENSGT00940000157372"/>
<dbReference type="HOGENOM" id="CLU_001232_1_1_1"/>
<dbReference type="InParanoid" id="Q8WYB5"/>
<dbReference type="OMA" id="AFQHQSG"/>
<dbReference type="OrthoDB" id="787137at2759"/>
<dbReference type="PAN-GO" id="Q8WYB5">
    <property type="GO annotations" value="7 GO annotations based on evolutionary models"/>
</dbReference>
<dbReference type="PhylomeDB" id="Q8WYB5"/>
<dbReference type="TreeFam" id="TF106483"/>
<dbReference type="BRENDA" id="2.3.1.48">
    <property type="organism ID" value="2681"/>
</dbReference>
<dbReference type="PathwayCommons" id="Q8WYB5"/>
<dbReference type="Reactome" id="R-HSA-3214847">
    <property type="pathway name" value="HATs acetylate histones"/>
</dbReference>
<dbReference type="SignaLink" id="Q8WYB5"/>
<dbReference type="SIGNOR" id="Q8WYB5"/>
<dbReference type="BioGRID-ORCS" id="23522">
    <property type="hits" value="17 hits in 1172 CRISPR screens"/>
</dbReference>
<dbReference type="ChiTaRS" id="KAT6B">
    <property type="organism name" value="human"/>
</dbReference>
<dbReference type="GeneWiki" id="MYST4"/>
<dbReference type="GenomeRNAi" id="23522"/>
<dbReference type="Pharos" id="Q8WYB5">
    <property type="development level" value="Tchem"/>
</dbReference>
<dbReference type="PRO" id="PR:Q8WYB5"/>
<dbReference type="Proteomes" id="UP000005640">
    <property type="component" value="Chromosome 10"/>
</dbReference>
<dbReference type="RNAct" id="Q8WYB5">
    <property type="molecule type" value="protein"/>
</dbReference>
<dbReference type="Bgee" id="ENSG00000156650">
    <property type="expression patterns" value="Expressed in cortical plate and 112 other cell types or tissues"/>
</dbReference>
<dbReference type="ExpressionAtlas" id="Q8WYB5">
    <property type="expression patterns" value="baseline and differential"/>
</dbReference>
<dbReference type="GO" id="GO:0000785">
    <property type="term" value="C:chromatin"/>
    <property type="evidence" value="ECO:0000318"/>
    <property type="project" value="GO_Central"/>
</dbReference>
<dbReference type="GO" id="GO:0070776">
    <property type="term" value="C:MOZ/MORF histone acetyltransferase complex"/>
    <property type="evidence" value="ECO:0000314"/>
    <property type="project" value="UniProtKB"/>
</dbReference>
<dbReference type="GO" id="GO:0005654">
    <property type="term" value="C:nucleoplasm"/>
    <property type="evidence" value="ECO:0000304"/>
    <property type="project" value="Reactome"/>
</dbReference>
<dbReference type="GO" id="GO:0000786">
    <property type="term" value="C:nucleosome"/>
    <property type="evidence" value="ECO:0000303"/>
    <property type="project" value="UniProtKB"/>
</dbReference>
<dbReference type="GO" id="GO:0005634">
    <property type="term" value="C:nucleus"/>
    <property type="evidence" value="ECO:0000314"/>
    <property type="project" value="ComplexPortal"/>
</dbReference>
<dbReference type="GO" id="GO:0003682">
    <property type="term" value="F:chromatin binding"/>
    <property type="evidence" value="ECO:0000318"/>
    <property type="project" value="GO_Central"/>
</dbReference>
<dbReference type="GO" id="GO:0003677">
    <property type="term" value="F:DNA binding"/>
    <property type="evidence" value="ECO:0007669"/>
    <property type="project" value="InterPro"/>
</dbReference>
<dbReference type="GO" id="GO:0004402">
    <property type="term" value="F:histone acetyltransferase activity"/>
    <property type="evidence" value="ECO:0000314"/>
    <property type="project" value="UniProtKB"/>
</dbReference>
<dbReference type="GO" id="GO:0010484">
    <property type="term" value="F:histone H3 acetyltransferase activity"/>
    <property type="evidence" value="ECO:0000318"/>
    <property type="project" value="GO_Central"/>
</dbReference>
<dbReference type="GO" id="GO:0036408">
    <property type="term" value="F:histone H3K14 acetyltransferase activity"/>
    <property type="evidence" value="ECO:0000314"/>
    <property type="project" value="UniProtKB"/>
</dbReference>
<dbReference type="GO" id="GO:0044877">
    <property type="term" value="F:protein-containing complex binding"/>
    <property type="evidence" value="ECO:0007669"/>
    <property type="project" value="Ensembl"/>
</dbReference>
<dbReference type="GO" id="GO:0061733">
    <property type="term" value="F:protein-lysine-acetyltransferase activity"/>
    <property type="evidence" value="ECO:0000314"/>
    <property type="project" value="UniProtKB"/>
</dbReference>
<dbReference type="GO" id="GO:0003713">
    <property type="term" value="F:transcription coactivator activity"/>
    <property type="evidence" value="ECO:0000314"/>
    <property type="project" value="UniProtKB"/>
</dbReference>
<dbReference type="GO" id="GO:0003712">
    <property type="term" value="F:transcription coregulator activity"/>
    <property type="evidence" value="ECO:0000318"/>
    <property type="project" value="GO_Central"/>
</dbReference>
<dbReference type="GO" id="GO:0008270">
    <property type="term" value="F:zinc ion binding"/>
    <property type="evidence" value="ECO:0007669"/>
    <property type="project" value="UniProtKB-KW"/>
</dbReference>
<dbReference type="GO" id="GO:0045892">
    <property type="term" value="P:negative regulation of DNA-templated transcription"/>
    <property type="evidence" value="ECO:0000314"/>
    <property type="project" value="UniProtKB"/>
</dbReference>
<dbReference type="GO" id="GO:0006334">
    <property type="term" value="P:nucleosome assembly"/>
    <property type="evidence" value="ECO:0000303"/>
    <property type="project" value="UniProtKB"/>
</dbReference>
<dbReference type="GO" id="GO:0045893">
    <property type="term" value="P:positive regulation of DNA-templated transcription"/>
    <property type="evidence" value="ECO:0000314"/>
    <property type="project" value="UniProtKB"/>
</dbReference>
<dbReference type="GO" id="GO:0045944">
    <property type="term" value="P:positive regulation of transcription by RNA polymerase II"/>
    <property type="evidence" value="ECO:0007669"/>
    <property type="project" value="Ensembl"/>
</dbReference>
<dbReference type="GO" id="GO:0050793">
    <property type="term" value="P:regulation of developmental process"/>
    <property type="evidence" value="ECO:0000303"/>
    <property type="project" value="ComplexPortal"/>
</dbReference>
<dbReference type="GO" id="GO:0006355">
    <property type="term" value="P:regulation of DNA-templated transcription"/>
    <property type="evidence" value="ECO:0000314"/>
    <property type="project" value="ComplexPortal"/>
</dbReference>
<dbReference type="GO" id="GO:1903706">
    <property type="term" value="P:regulation of hemopoiesis"/>
    <property type="evidence" value="ECO:0000303"/>
    <property type="project" value="ComplexPortal"/>
</dbReference>
<dbReference type="GO" id="GO:0006357">
    <property type="term" value="P:regulation of transcription by RNA polymerase II"/>
    <property type="evidence" value="ECO:0000318"/>
    <property type="project" value="GO_Central"/>
</dbReference>
<dbReference type="CDD" id="cd15618">
    <property type="entry name" value="PHD1_MOZ_MORF"/>
    <property type="match status" value="1"/>
</dbReference>
<dbReference type="CDD" id="cd15527">
    <property type="entry name" value="PHD2_KAT6A_6B"/>
    <property type="match status" value="1"/>
</dbReference>
<dbReference type="FunFam" id="1.10.10.10:FF:000123">
    <property type="entry name" value="Histone acetyltransferase"/>
    <property type="match status" value="1"/>
</dbReference>
<dbReference type="FunFam" id="1.10.10.10:FF:000132">
    <property type="entry name" value="Histone acetyltransferase"/>
    <property type="match status" value="1"/>
</dbReference>
<dbReference type="FunFam" id="3.30.40.10:FF:000035">
    <property type="entry name" value="Histone acetyltransferase"/>
    <property type="match status" value="1"/>
</dbReference>
<dbReference type="FunFam" id="3.30.60.60:FF:000002">
    <property type="entry name" value="Histone acetyltransferase"/>
    <property type="match status" value="1"/>
</dbReference>
<dbReference type="FunFam" id="3.40.630.30:FF:000001">
    <property type="entry name" value="Histone acetyltransferase"/>
    <property type="match status" value="1"/>
</dbReference>
<dbReference type="Gene3D" id="3.40.630.30">
    <property type="match status" value="1"/>
</dbReference>
<dbReference type="Gene3D" id="3.30.60.60">
    <property type="entry name" value="N-acetyl transferase-like"/>
    <property type="match status" value="1"/>
</dbReference>
<dbReference type="Gene3D" id="1.10.10.10">
    <property type="entry name" value="Winged helix-like DNA-binding domain superfamily/Winged helix DNA-binding domain"/>
    <property type="match status" value="2"/>
</dbReference>
<dbReference type="Gene3D" id="3.30.40.10">
    <property type="entry name" value="Zinc/RING finger domain, C3HC4 (zinc finger)"/>
    <property type="match status" value="1"/>
</dbReference>
<dbReference type="InterPro" id="IPR016181">
    <property type="entry name" value="Acyl_CoA_acyltransferase"/>
</dbReference>
<dbReference type="InterPro" id="IPR002717">
    <property type="entry name" value="HAT_MYST-type"/>
</dbReference>
<dbReference type="InterPro" id="IPR005818">
    <property type="entry name" value="Histone_H1/H5_H15"/>
</dbReference>
<dbReference type="InterPro" id="IPR050603">
    <property type="entry name" value="MYST_HAT"/>
</dbReference>
<dbReference type="InterPro" id="IPR048589">
    <property type="entry name" value="SAMD1-like_WH"/>
</dbReference>
<dbReference type="InterPro" id="IPR036388">
    <property type="entry name" value="WH-like_DNA-bd_sf"/>
</dbReference>
<dbReference type="InterPro" id="IPR036390">
    <property type="entry name" value="WH_DNA-bd_sf"/>
</dbReference>
<dbReference type="InterPro" id="IPR040706">
    <property type="entry name" value="Zf-MYST"/>
</dbReference>
<dbReference type="InterPro" id="IPR011011">
    <property type="entry name" value="Znf_FYVE_PHD"/>
</dbReference>
<dbReference type="InterPro" id="IPR001965">
    <property type="entry name" value="Znf_PHD"/>
</dbReference>
<dbReference type="InterPro" id="IPR019787">
    <property type="entry name" value="Znf_PHD-finger"/>
</dbReference>
<dbReference type="InterPro" id="IPR013083">
    <property type="entry name" value="Znf_RING/FYVE/PHD"/>
</dbReference>
<dbReference type="PANTHER" id="PTHR10615">
    <property type="entry name" value="HISTONE ACETYLTRANSFERASE"/>
    <property type="match status" value="1"/>
</dbReference>
<dbReference type="PANTHER" id="PTHR10615:SF73">
    <property type="entry name" value="HISTONE ACETYLTRANSFERASE KAT6B"/>
    <property type="match status" value="1"/>
</dbReference>
<dbReference type="Pfam" id="PF01853">
    <property type="entry name" value="MOZ_SAS"/>
    <property type="match status" value="1"/>
</dbReference>
<dbReference type="Pfam" id="PF00628">
    <property type="entry name" value="PHD"/>
    <property type="match status" value="1"/>
</dbReference>
<dbReference type="Pfam" id="PF21524">
    <property type="entry name" value="SAMD1_WH"/>
    <property type="match status" value="1"/>
</dbReference>
<dbReference type="Pfam" id="PF17772">
    <property type="entry name" value="zf-MYST"/>
    <property type="match status" value="1"/>
</dbReference>
<dbReference type="SMART" id="SM00526">
    <property type="entry name" value="H15"/>
    <property type="match status" value="1"/>
</dbReference>
<dbReference type="SMART" id="SM00249">
    <property type="entry name" value="PHD"/>
    <property type="match status" value="2"/>
</dbReference>
<dbReference type="SUPFAM" id="SSF55729">
    <property type="entry name" value="Acyl-CoA N-acyltransferases (Nat)"/>
    <property type="match status" value="1"/>
</dbReference>
<dbReference type="SUPFAM" id="SSF57903">
    <property type="entry name" value="FYVE/PHD zinc finger"/>
    <property type="match status" value="1"/>
</dbReference>
<dbReference type="SUPFAM" id="SSF46785">
    <property type="entry name" value="Winged helix' DNA-binding domain"/>
    <property type="match status" value="1"/>
</dbReference>
<dbReference type="PROSITE" id="PS51504">
    <property type="entry name" value="H15"/>
    <property type="match status" value="1"/>
</dbReference>
<dbReference type="PROSITE" id="PS51726">
    <property type="entry name" value="MYST_HAT"/>
    <property type="match status" value="1"/>
</dbReference>
<dbReference type="PROSITE" id="PS52014">
    <property type="entry name" value="SAMD1_WH"/>
    <property type="match status" value="1"/>
</dbReference>
<dbReference type="PROSITE" id="PS01359">
    <property type="entry name" value="ZF_PHD_1"/>
    <property type="match status" value="1"/>
</dbReference>
<dbReference type="PROSITE" id="PS50016">
    <property type="entry name" value="ZF_PHD_2"/>
    <property type="match status" value="2"/>
</dbReference>
<reference key="1">
    <citation type="journal article" date="1999" name="J. Biol. Chem.">
        <title>Identification of a human histone acetyltransferase related to monocytic leukemia zinc finger protein.</title>
        <authorList>
            <person name="Champagne N."/>
            <person name="Bertos N.R."/>
            <person name="Pelletier N."/>
            <person name="Wang A.H."/>
            <person name="Vezmar M."/>
            <person name="Yang Y."/>
            <person name="Heng H.H."/>
            <person name="Yang X.-J."/>
        </authorList>
    </citation>
    <scope>NUCLEOTIDE SEQUENCE [MRNA] (ISOFORMS 1; 2 AND 3)</scope>
    <scope>TISSUE SPECIFICITY</scope>
    <scope>AUTOACETYLATION</scope>
    <scope>CATALYTIC ACTIVITY</scope>
    <scope>DOMAIN</scope>
    <scope>FUNCTION</scope>
    <source>
        <tissue>Bone marrow</tissue>
    </source>
</reference>
<reference key="2">
    <citation type="submission" date="1999-12" db="EMBL/GenBank/DDBJ databases">
        <title>Structure and function of the human MYST family: MOZ2, MYST1 and MYST2.</title>
        <authorList>
            <person name="Borrow J."/>
            <person name="Housman D.E."/>
        </authorList>
    </citation>
    <scope>NUCLEOTIDE SEQUENCE [MRNA] (ISOFORM 1)</scope>
</reference>
<reference key="3">
    <citation type="journal article" date="1997" name="DNA Res.">
        <title>Prediction of the coding sequences of unidentified human genes. VII. The complete sequences of 100 new cDNA clones from brain which can code for large proteins in vitro.</title>
        <authorList>
            <person name="Nagase T."/>
            <person name="Ishikawa K."/>
            <person name="Nakajima D."/>
            <person name="Ohira M."/>
            <person name="Seki N."/>
            <person name="Miyajima N."/>
            <person name="Tanaka A."/>
            <person name="Kotani H."/>
            <person name="Nomura N."/>
            <person name="Ohara O."/>
        </authorList>
    </citation>
    <scope>NUCLEOTIDE SEQUENCE [LARGE SCALE MRNA] (ISOFORM 3)</scope>
    <source>
        <tissue>Brain</tissue>
    </source>
</reference>
<reference key="4">
    <citation type="journal article" date="2002" name="DNA Res.">
        <title>Construction of expression-ready cDNA clones for KIAA genes: manual curation of 330 KIAA cDNA clones.</title>
        <authorList>
            <person name="Nakajima D."/>
            <person name="Okazaki N."/>
            <person name="Yamakawa H."/>
            <person name="Kikuno R."/>
            <person name="Ohara O."/>
            <person name="Nagase T."/>
        </authorList>
    </citation>
    <scope>SEQUENCE REVISION</scope>
</reference>
<reference key="5">
    <citation type="journal article" date="2004" name="Genome Res.">
        <title>The status, quality, and expansion of the NIH full-length cDNA project: the Mammalian Gene Collection (MGC).</title>
        <authorList>
            <consortium name="The MGC Project Team"/>
        </authorList>
    </citation>
    <scope>NUCLEOTIDE SEQUENCE [LARGE SCALE MRNA] OF 1-322 AND 1187-2073</scope>
    <source>
        <tissue>Brain</tissue>
        <tissue>Lung</tissue>
    </source>
</reference>
<reference key="6">
    <citation type="journal article" date="2001" name="Hum. Mol. Genet.">
        <title>Fusion of the MORF and CBP genes in acute myeloid leukemia with the t(10;16)(q22;p13).</title>
        <authorList>
            <person name="Panagopoulos I."/>
            <person name="Fioretos T."/>
            <person name="Isaksson M."/>
            <person name="Samuelsson U."/>
            <person name="Billstroem R."/>
            <person name="Stroembeck B."/>
            <person name="Mitelman F."/>
            <person name="Johansson B."/>
        </authorList>
    </citation>
    <scope>NUCLEOTIDE SEQUENCE [MRNA] OF 1136-1287</scope>
    <scope>CHROMOSOMAL TRANSLOCATION WITH CREBBP</scope>
</reference>
<reference key="7">
    <citation type="journal article" date="2002" name="Oncogene">
        <title>MOZ and MORF histone acetyltransferases interact with the Runt-domain transcription factor Runx2.</title>
        <authorList>
            <person name="Pelletier N."/>
            <person name="Champagne N."/>
            <person name="Stifani S."/>
            <person name="Yang X.-J."/>
        </authorList>
    </citation>
    <scope>INTERACTION WITH RUNX1 AND RUNX2</scope>
    <scope>AUTOACETYLATION</scope>
    <scope>FUNCTION</scope>
</reference>
<reference key="8">
    <citation type="journal article" date="2006" name="Mol. Cell">
        <title>ING tumor suppressor proteins are critical regulators of chromatin acetylation required for genome expression and perpetuation.</title>
        <authorList>
            <person name="Doyon Y."/>
            <person name="Cayrou C."/>
            <person name="Ullah M."/>
            <person name="Landry A.-J."/>
            <person name="Cote V."/>
            <person name="Selleck W."/>
            <person name="Lane W.S."/>
            <person name="Tan S."/>
            <person name="Yang X.-J."/>
            <person name="Cote J."/>
        </authorList>
    </citation>
    <scope>FUNCTION</scope>
    <scope>IDENTIFICATION IN THE MOZ/MORF COMPLEX</scope>
</reference>
<reference key="9">
    <citation type="journal article" date="2008" name="Mol. Cell. Biol.">
        <title>Molecular architecture of quartet MOZ/MORF histone acetyltransferase complexes.</title>
        <authorList>
            <person name="Ullah M."/>
            <person name="Pelletier N."/>
            <person name="Xiao L."/>
            <person name="Zhao S.P."/>
            <person name="Wang K."/>
            <person name="Degerny C."/>
            <person name="Tahmasebi S."/>
            <person name="Cayrou C."/>
            <person name="Doyon Y."/>
            <person name="Goh S.-L."/>
            <person name="Champagne N."/>
            <person name="Cote J."/>
            <person name="Yang X.-J."/>
        </authorList>
    </citation>
    <scope>IDENTIFICATION IN THE MOZ/MORF COMPLEX</scope>
    <scope>INTERACTION WITH BRPF1</scope>
</reference>
<reference key="10">
    <citation type="journal article" date="2009" name="Science">
        <title>Lysine acetylation targets protein complexes and co-regulates major cellular functions.</title>
        <authorList>
            <person name="Choudhary C."/>
            <person name="Kumar C."/>
            <person name="Gnad F."/>
            <person name="Nielsen M.L."/>
            <person name="Rehman M."/>
            <person name="Walther T.C."/>
            <person name="Olsen J.V."/>
            <person name="Mann M."/>
        </authorList>
    </citation>
    <scope>ACETYLATION [LARGE SCALE ANALYSIS] AT LYS-1038; LYS-1042 AND LYS-1044</scope>
    <scope>IDENTIFICATION BY MASS SPECTROMETRY [LARGE SCALE ANALYSIS]</scope>
</reference>
<reference key="11">
    <citation type="journal article" date="2011" name="Am. J. Hum. Genet.">
        <title>Whole-exome-sequencing identifies mutations in histone acetyltransferase gene KAT6B in individuals with the Say-Barber-Biesecker variant of Ohdo syndrome.</title>
        <authorList>
            <person name="Clayton-Smith J."/>
            <person name="O'Sullivan J."/>
            <person name="Daly S."/>
            <person name="Bhaskar S."/>
            <person name="Day R."/>
            <person name="Anderson B."/>
            <person name="Voss A.K."/>
            <person name="Thomas T."/>
            <person name="Biesecker L.G."/>
            <person name="Smith P."/>
            <person name="Fryer A."/>
            <person name="Chandler K.E."/>
            <person name="Kerr B."/>
            <person name="Tassabehji M."/>
            <person name="Lynch S.A."/>
            <person name="Krajewska-Walasek M."/>
            <person name="McKee S."/>
            <person name="Smith J."/>
            <person name="Sweeney E."/>
            <person name="Mansour S."/>
            <person name="Mohammed S."/>
            <person name="Donnai D."/>
            <person name="Black G."/>
        </authorList>
    </citation>
    <scope>INVOLVEMENT IN SBBYSS</scope>
    <scope>VARIANT LYS-360</scope>
</reference>
<reference key="12">
    <citation type="journal article" date="2012" name="Am. J. Hum. Genet.">
        <title>Mutations in KAT6B, encoding a histone acetyltransferase, cause Genitopatellar syndrome.</title>
        <authorList>
            <person name="Campeau P.M."/>
            <person name="Kim J.C."/>
            <person name="Lu J.T."/>
            <person name="Schwartzentruber J.A."/>
            <person name="Abdul-Rahman O.A."/>
            <person name="Schlaubitz S."/>
            <person name="Murdock D.M."/>
            <person name="Jiang M.M."/>
            <person name="Lammer E.J."/>
            <person name="Enns G.M."/>
            <person name="Rhead W.J."/>
            <person name="Rowland J."/>
            <person name="Robertson S.P."/>
            <person name="Cormier-Daire V."/>
            <person name="Bainbridge M.N."/>
            <person name="Yang X.J."/>
            <person name="Gingras M.C."/>
            <person name="Gibbs R.A."/>
            <person name="Rosenblatt D.S."/>
            <person name="Majewski J."/>
            <person name="Lee B.H."/>
        </authorList>
    </citation>
    <scope>INVOLVEMENT IN GTPTS</scope>
</reference>
<reference key="13">
    <citation type="journal article" date="2013" name="J. Proteome Res.">
        <title>Toward a comprehensive characterization of a human cancer cell phosphoproteome.</title>
        <authorList>
            <person name="Zhou H."/>
            <person name="Di Palma S."/>
            <person name="Preisinger C."/>
            <person name="Peng M."/>
            <person name="Polat A.N."/>
            <person name="Heck A.J."/>
            <person name="Mohammed S."/>
        </authorList>
    </citation>
    <scope>PHOSPHORYLATION [LARGE SCALE ANALYSIS] AT SER-355; SER-647 AND SER-1048</scope>
    <scope>IDENTIFICATION BY MASS SPECTROMETRY [LARGE SCALE ANALYSIS]</scope>
    <source>
        <tissue>Cervix carcinoma</tissue>
        <tissue>Erythroleukemia</tissue>
    </source>
</reference>
<reference key="14">
    <citation type="journal article" date="2015" name="Cell Rep.">
        <title>SUMO-2 orchestrates chromatin modifiers in response to DNA damage.</title>
        <authorList>
            <person name="Hendriks I.A."/>
            <person name="Treffers L.W."/>
            <person name="Verlaan-de Vries M."/>
            <person name="Olsen J.V."/>
            <person name="Vertegaal A.C."/>
        </authorList>
    </citation>
    <scope>SUMOYLATION [LARGE SCALE ANALYSIS] AT LYS-673</scope>
    <scope>IDENTIFICATION BY MASS SPECTROMETRY [LARGE SCALE ANALYSIS]</scope>
</reference>
<reference key="15">
    <citation type="journal article" date="2015" name="Mol. Cell. Proteomics">
        <title>System-wide analysis of SUMOylation dynamics in response to replication stress reveals novel small ubiquitin-like modified target proteins and acceptor lysines relevant for genome stability.</title>
        <authorList>
            <person name="Xiao Z."/>
            <person name="Chang J.G."/>
            <person name="Hendriks I.A."/>
            <person name="Sigurdsson J.O."/>
            <person name="Olsen J.V."/>
            <person name="Vertegaal A.C."/>
        </authorList>
    </citation>
    <scope>SUMOYLATION [LARGE SCALE ANALYSIS] AT LYS-673</scope>
    <scope>IDENTIFICATION BY MASS SPECTROMETRY [LARGE SCALE ANALYSIS]</scope>
</reference>
<reference key="16">
    <citation type="journal article" date="2017" name="Nat. Struct. Mol. Biol.">
        <title>Site-specific mapping of the human SUMO proteome reveals co-modification with phosphorylation.</title>
        <authorList>
            <person name="Hendriks I.A."/>
            <person name="Lyon D."/>
            <person name="Young C."/>
            <person name="Jensen L.J."/>
            <person name="Vertegaal A.C."/>
            <person name="Nielsen M.L."/>
        </authorList>
    </citation>
    <scope>SUMOYLATION [LARGE SCALE ANALYSIS] AT LYS-673</scope>
    <scope>IDENTIFICATION BY MASS SPECTROMETRY [LARGE SCALE ANALYSIS]</scope>
</reference>
<reference key="17">
    <citation type="journal article" date="2006" name="Science">
        <title>The consensus coding sequences of human breast and colorectal cancers.</title>
        <authorList>
            <person name="Sjoeblom T."/>
            <person name="Jones S."/>
            <person name="Wood L.D."/>
            <person name="Parsons D.W."/>
            <person name="Lin J."/>
            <person name="Barber T.D."/>
            <person name="Mandelker D."/>
            <person name="Leary R.J."/>
            <person name="Ptak J."/>
            <person name="Silliman N."/>
            <person name="Szabo S."/>
            <person name="Buckhaults P."/>
            <person name="Farrell C."/>
            <person name="Meeh P."/>
            <person name="Markowitz S.D."/>
            <person name="Willis J."/>
            <person name="Dawson D."/>
            <person name="Willson J.K.V."/>
            <person name="Gazdar A.F."/>
            <person name="Hartigan J."/>
            <person name="Wu L."/>
            <person name="Liu C."/>
            <person name="Parmigiani G."/>
            <person name="Park B.H."/>
            <person name="Bachman K.E."/>
            <person name="Papadopoulos N."/>
            <person name="Vogelstein B."/>
            <person name="Kinzler K.W."/>
            <person name="Velculescu V.E."/>
        </authorList>
    </citation>
    <scope>VARIANT [LARGE SCALE ANALYSIS] ALA-483</scope>
</reference>
<name>KAT6B_HUMAN</name>
<proteinExistence type="evidence at protein level"/>
<gene>
    <name type="primary">KAT6B</name>
    <name type="synonym">KIAA0383</name>
    <name type="synonym">MORF</name>
    <name type="synonym">MOZ2</name>
    <name type="synonym">MYST4</name>
</gene>
<organism>
    <name type="scientific">Homo sapiens</name>
    <name type="common">Human</name>
    <dbReference type="NCBI Taxonomy" id="9606"/>
    <lineage>
        <taxon>Eukaryota</taxon>
        <taxon>Metazoa</taxon>
        <taxon>Chordata</taxon>
        <taxon>Craniata</taxon>
        <taxon>Vertebrata</taxon>
        <taxon>Euteleostomi</taxon>
        <taxon>Mammalia</taxon>
        <taxon>Eutheria</taxon>
        <taxon>Euarchontoglires</taxon>
        <taxon>Primates</taxon>
        <taxon>Haplorrhini</taxon>
        <taxon>Catarrhini</taxon>
        <taxon>Hominidae</taxon>
        <taxon>Homo</taxon>
    </lineage>
</organism>
<comment type="function">
    <text evidence="8 10 11">Histone acetyltransferase which may be involved in both positive and negative regulation of transcription. Required for RUNX2-dependent transcriptional activation. May be involved in cerebral cortex development. Component of the MOZ/MORF complex which has a histone H3 acetyltransferase activity.</text>
</comment>
<comment type="catalytic activity">
    <reaction evidence="8">
        <text>L-lysyl-[protein] + acetyl-CoA = N(6)-acetyl-L-lysyl-[protein] + CoA + H(+)</text>
        <dbReference type="Rhea" id="RHEA:45948"/>
        <dbReference type="Rhea" id="RHEA-COMP:9752"/>
        <dbReference type="Rhea" id="RHEA-COMP:10731"/>
        <dbReference type="ChEBI" id="CHEBI:15378"/>
        <dbReference type="ChEBI" id="CHEBI:29969"/>
        <dbReference type="ChEBI" id="CHEBI:57287"/>
        <dbReference type="ChEBI" id="CHEBI:57288"/>
        <dbReference type="ChEBI" id="CHEBI:61930"/>
        <dbReference type="EC" id="2.3.1.48"/>
    </reaction>
</comment>
<comment type="subunit">
    <text evidence="10 11 13">Component of the MOZ/MORF complex composed at least of ING5, KAT6A, KAT6B, MEAF6 and one of BRPF1, BRD1/BRPF2 and BRPF3. Interacts with RUNX1 and RUNX2.</text>
</comment>
<comment type="subcellular location">
    <subcellularLocation>
        <location evidence="18">Nucleus</location>
    </subcellularLocation>
</comment>
<comment type="alternative products">
    <event type="alternative splicing"/>
    <isoform>
        <id>Q8WYB5-1</id>
        <name>1</name>
        <name>Beta</name>
        <sequence type="displayed"/>
    </isoform>
    <isoform>
        <id>Q8WYB5-2</id>
        <name>2</name>
        <name>Alpha</name>
        <sequence type="described" ref="VSP_014587"/>
    </isoform>
    <isoform>
        <id>Q8WYB5-3</id>
        <name>3</name>
        <sequence type="described" ref="VSP_014586"/>
    </isoform>
</comment>
<comment type="tissue specificity">
    <text evidence="8">Ubiquitously expressed, with high levels in heart, pancreas, testis and ovary.</text>
</comment>
<comment type="domain">
    <text evidence="8">The N-terminus is involved in transcriptional activation while the C-terminus is involved in transcriptional repression.</text>
</comment>
<comment type="PTM">
    <text evidence="2 8 10">Autoacetylated (PubMed:10497217, PubMed:11965546). Autoacetylation at Lys-815 is required for proper function.</text>
</comment>
<comment type="disease">
    <text evidence="9">A chromosomal aberration involving KAT6B may be a cause acute myeloid leukemias. Translocation t(10;16)(q22;p13) with CREBBP.</text>
</comment>
<comment type="disease" evidence="14">
    <disease id="DI-03311">
        <name>Ohdo syndrome, SBBYS variant</name>
        <acronym>SBBYSS</acronym>
        <description>A syndrome characterized by distinctive facial appearance with severe blepharophimosis, an immobile mask-like face, a bulbous nasal tip, and a small mouth with a thin upper lip. The condition presents in infancy with severe hypotonia and feeding problems. Associated skeletal problems include joint laxity, abnormally long thumbs and great toes, and dislocated or hypoplastic patellae. Structural cardiac defects are present in around 50% of cases, and dental anomalies, including small and pointed teeth, are common. Optic atrophy and conductive or sensorineural deafness are repeatedly reported. Many affected individuals have abnormalities of thyroid structure or function. SBBYSS is usually associated with severe intellectual disability, delayed motor milestones, and significantly impaired speech.</description>
        <dbReference type="MIM" id="603736"/>
    </disease>
    <text>The disease is caused by variants affecting the gene represented in this entry.</text>
</comment>
<comment type="disease" evidence="15">
    <disease id="DI-03437">
        <name>Genitopatellar syndrome</name>
        <acronym>GTPTS</acronym>
        <description>A rare disorder consisting of microcephaly, severe psychomotor retardation, and characteristic coarse facial features, including broad nose and small or retracted chin, associated with congenital flexion contractures of the lower extremities, abnormal or missing patellae, and urogenital anomalies.</description>
        <dbReference type="MIM" id="606170"/>
    </disease>
    <text>The disease is caused by variants affecting the gene represented in this entry.</text>
</comment>
<comment type="similarity">
    <text evidence="18">Belongs to the MYST (SAS/MOZ) family.</text>
</comment>
<comment type="sequence caution" evidence="18">
    <conflict type="frameshift">
        <sequence resource="EMBL-CDS" id="AAF00100"/>
    </conflict>
</comment>
<comment type="sequence caution" evidence="18">
    <conflict type="miscellaneous discrepancy">
        <sequence resource="EMBL-CDS" id="AAH14143"/>
    </conflict>
    <text>Contaminating sequence. Potential poly-A sequence.</text>
</comment>
<comment type="sequence caution" evidence="18">
    <conflict type="miscellaneous discrepancy">
        <sequence resource="EMBL-CDS" id="AAH48199"/>
    </conflict>
    <text>Contaminating sequence. Potential poly-A sequence.</text>
</comment>
<comment type="online information" name="Atlas of Genetics and Cytogenetics in Oncology and Haematology">
    <link uri="https://atlasgeneticsoncology.org/gene/41488/MYST4"/>
</comment>
<protein>
    <recommendedName>
        <fullName>Histone acetyltransferase KAT6B</fullName>
        <ecNumber evidence="8">2.3.1.48</ecNumber>
    </recommendedName>
    <alternativeName>
        <fullName>Histone acetyltransferase MOZ2</fullName>
    </alternativeName>
    <alternativeName>
        <fullName>MOZ, YBF2/SAS3, SAS2 and TIP60 protein 4</fullName>
        <shortName>MYST-4</shortName>
    </alternativeName>
    <alternativeName>
        <fullName>Monocytic leukemia zinc finger protein-related factor</fullName>
    </alternativeName>
</protein>
<evidence type="ECO:0000250" key="1">
    <source>
        <dbReference type="UniProtKB" id="Q92794"/>
    </source>
</evidence>
<evidence type="ECO:0000250" key="2">
    <source>
        <dbReference type="UniProtKB" id="Q9H7Z6"/>
    </source>
</evidence>
<evidence type="ECO:0000255" key="3">
    <source>
        <dbReference type="PROSITE-ProRule" id="PRU00146"/>
    </source>
</evidence>
<evidence type="ECO:0000255" key="4">
    <source>
        <dbReference type="PROSITE-ProRule" id="PRU00837"/>
    </source>
</evidence>
<evidence type="ECO:0000255" key="5">
    <source>
        <dbReference type="PROSITE-ProRule" id="PRU01063"/>
    </source>
</evidence>
<evidence type="ECO:0000255" key="6">
    <source>
        <dbReference type="PROSITE-ProRule" id="PRU01358"/>
    </source>
</evidence>
<evidence type="ECO:0000256" key="7">
    <source>
        <dbReference type="SAM" id="MobiDB-lite"/>
    </source>
</evidence>
<evidence type="ECO:0000269" key="8">
    <source>
    </source>
</evidence>
<evidence type="ECO:0000269" key="9">
    <source>
    </source>
</evidence>
<evidence type="ECO:0000269" key="10">
    <source>
    </source>
</evidence>
<evidence type="ECO:0000269" key="11">
    <source>
    </source>
</evidence>
<evidence type="ECO:0000269" key="12">
    <source>
    </source>
</evidence>
<evidence type="ECO:0000269" key="13">
    <source>
    </source>
</evidence>
<evidence type="ECO:0000269" key="14">
    <source>
    </source>
</evidence>
<evidence type="ECO:0000269" key="15">
    <source>
    </source>
</evidence>
<evidence type="ECO:0000303" key="16">
    <source>
    </source>
</evidence>
<evidence type="ECO:0000303" key="17">
    <source>
    </source>
</evidence>
<evidence type="ECO:0000305" key="18"/>
<evidence type="ECO:0007744" key="19">
    <source>
    </source>
</evidence>
<evidence type="ECO:0007744" key="20">
    <source>
    </source>
</evidence>
<evidence type="ECO:0007744" key="21">
    <source>
    </source>
</evidence>
<evidence type="ECO:0007744" key="22">
    <source>
    </source>
</evidence>
<evidence type="ECO:0007744" key="23">
    <source>
    </source>
</evidence>
<evidence type="ECO:0007829" key="24">
    <source>
        <dbReference type="PDB" id="5U2J"/>
    </source>
</evidence>
<evidence type="ECO:0007829" key="25">
    <source>
        <dbReference type="PDB" id="8E4V"/>
    </source>
</evidence>
<keyword id="KW-0002">3D-structure</keyword>
<keyword id="KW-0007">Acetylation</keyword>
<keyword id="KW-0010">Activator</keyword>
<keyword id="KW-0012">Acyltransferase</keyword>
<keyword id="KW-0025">Alternative splicing</keyword>
<keyword id="KW-0156">Chromatin regulator</keyword>
<keyword id="KW-0160">Chromosomal rearrangement</keyword>
<keyword id="KW-1017">Isopeptide bond</keyword>
<keyword id="KW-0479">Metal-binding</keyword>
<keyword id="KW-0539">Nucleus</keyword>
<keyword id="KW-0597">Phosphoprotein</keyword>
<keyword id="KW-1267">Proteomics identification</keyword>
<keyword id="KW-1185">Reference proteome</keyword>
<keyword id="KW-0677">Repeat</keyword>
<keyword id="KW-0678">Repressor</keyword>
<keyword id="KW-0804">Transcription</keyword>
<keyword id="KW-0805">Transcription regulation</keyword>
<keyword id="KW-0808">Transferase</keyword>
<keyword id="KW-0832">Ubl conjugation</keyword>
<keyword id="KW-0862">Zinc</keyword>
<keyword id="KW-0863">Zinc-finger</keyword>
<accession>Q8WYB5</accession>
<accession>O15087</accession>
<accession>Q86Y05</accession>
<accession>Q8WU81</accession>
<accession>Q9UKW2</accession>
<accession>Q9UKW3</accession>
<accession>Q9UKX0</accession>